<proteinExistence type="evidence at protein level"/>
<protein>
    <recommendedName>
        <fullName>Lipopolysaccharide-induced tumor necrosis factor-alpha factor homolog</fullName>
        <shortName>LPS-induced TNF-alpha factor homolog</shortName>
    </recommendedName>
    <alternativeName>
        <fullName evidence="12">Estrogen-enhanced transcript protein</fullName>
        <shortName evidence="12">mEET</shortName>
    </alternativeName>
    <alternativeName>
        <fullName>LITAF-like protein</fullName>
    </alternativeName>
    <alternativeName>
        <fullName>NEDD4 WW domain-binding protein 3</fullName>
    </alternativeName>
</protein>
<organism>
    <name type="scientific">Mus musculus</name>
    <name type="common">Mouse</name>
    <dbReference type="NCBI Taxonomy" id="10090"/>
    <lineage>
        <taxon>Eukaryota</taxon>
        <taxon>Metazoa</taxon>
        <taxon>Chordata</taxon>
        <taxon>Craniata</taxon>
        <taxon>Vertebrata</taxon>
        <taxon>Euteleostomi</taxon>
        <taxon>Mammalia</taxon>
        <taxon>Eutheria</taxon>
        <taxon>Euarchontoglires</taxon>
        <taxon>Glires</taxon>
        <taxon>Rodentia</taxon>
        <taxon>Myomorpha</taxon>
        <taxon>Muroidea</taxon>
        <taxon>Muridae</taxon>
        <taxon>Murinae</taxon>
        <taxon>Mus</taxon>
        <taxon>Mus</taxon>
    </lineage>
</organism>
<name>LITAF_MOUSE</name>
<sequence length="161" mass="16946">MSAPGPYQAAAGPSVVPTAPPTYEETVGVNSYYPTPPAPMPGPATGLITGPDGKGMNPPSYYTQPVPVPNANAIAVQTVYVQQPVSFYDRPVQMCCPSCSKMIVTQLSYNAGALTWLSCGSLCLLGCVAGCCFIPFCVDALQDVDHYCPNCKALLGTYKRL</sequence>
<comment type="function">
    <text evidence="1 4 5 6 7 8 11">Plays a role in endosomal protein trafficking and in targeting proteins for lysosomal degradation. Plays a role in targeting endocytosed EGFR and ERGG3 for lysosomal degradation, and thereby helps down-regulate downstream signaling cascades (PubMed:23166352). Helps recruit the ESCRT complex components TSG101, HGS and STAM to cytoplasmic membranes. Probably plays a role in regulating protein degradation via its interaction with NEDD4 (By similarity). May also contribute to the regulation of gene expression in the nucleus. Binds DNA (in vitro) and may play a synergistic role with STAT6 in the nucleus in regulating the expression of various cytokines (PubMed:15793005, PubMed:21980379). May regulate the expression of numerous cytokines, such as TNF, CCL2, CCL5, CXCL1, IL1A and IL10 (PubMed:12355436, PubMed:15025820, PubMed:16954198, PubMed:21980379, PubMed:22160695).</text>
</comment>
<comment type="subunit">
    <text evidence="1 3 6">Monomer. Interacts with NEDD4 (PubMed:11042109). Interacts (via PSAP motif) with TSG101, a component of the ESCRT-I complex (endosomal sorting complex required for transport I). Interacts with WWOX. Interacts with STAM, a component of the ESCRT-0 complex; the interaction is direct. Identified in a complex with STAM and HGS; within this complex, interacts directly with STAM, but not with HGS. Interacts with STAT6 (PubMed:15793005).</text>
</comment>
<comment type="interaction">
    <interactant intactId="EBI-643664">
        <id>Q9JLJ0</id>
    </interactant>
    <interactant intactId="EBI-773516">
        <id>P46935</id>
        <label>Nedd4</label>
    </interactant>
    <organismsDiffer>false</organismsDiffer>
    <experiments>5</experiments>
</comment>
<comment type="subcellular location">
    <subcellularLocation>
        <location evidence="1">Cytoplasm</location>
    </subcellularLocation>
    <subcellularLocation>
        <location evidence="1">Nucleus</location>
    </subcellularLocation>
    <subcellularLocation>
        <location evidence="1">Lysosome membrane</location>
        <topology evidence="1">Peripheral membrane protein</topology>
        <orientation evidence="1">Cytoplasmic side</orientation>
    </subcellularLocation>
    <subcellularLocation>
        <location evidence="1">Early endosome membrane</location>
    </subcellularLocation>
    <subcellularLocation>
        <location evidence="1">Late endosome membrane</location>
    </subcellularLocation>
    <subcellularLocation>
        <location evidence="1">Endosome membrane</location>
        <topology evidence="1">Peripheral membrane protein</topology>
        <orientation evidence="1">Cytoplasmic side</orientation>
    </subcellularLocation>
    <subcellularLocation>
        <location evidence="1">Cell membrane</location>
        <topology evidence="1">Peripheral membrane protein</topology>
        <orientation evidence="1">Cytoplasmic side</orientation>
    </subcellularLocation>
    <subcellularLocation>
        <location evidence="1">Golgi apparatus membrane</location>
    </subcellularLocation>
    <text evidence="1 10">Associated with membranes of lysosomes, early and late endosomes. Can translocate from the cytoplasm into the nucleus (By similarity). Detected at Schmidt-Lanterman incisures and in nodal regions of myelinating Schwann cells (PubMed:22729949).</text>
</comment>
<comment type="tissue specificity">
    <text evidence="4 5 9 10">Detected in brain, heart, lung, liver, spleen and bone marrow (PubMed:22160695). Detected in myelinating Schwann cells in sciatic nerve and in bone marrow-derived macrophages (at protein level) (PubMed:22729949). Widely expressed. Highly expressed in liver.</text>
</comment>
<comment type="developmental stage">
    <text evidence="5 10">Expression in sciatic nerve is low in neonates, culminates seven days after birth and decreases rapidly thereafter (at protein level) (PubMed:22729949). Strong expression is detected at E.7 and drops at 11 dpc.</text>
</comment>
<comment type="induction">
    <text evidence="4 5 6">Up-regulated in macrophages exposed to lipopolysaccharide (LPS) (at protein level) (PubMed:15793005). By estrogen and lipopolysaccharides (LPS).</text>
</comment>
<comment type="domain">
    <text evidence="1">The PPxY motif mediates interaction with WWOX and NEDD4.</text>
</comment>
<comment type="domain">
    <text evidence="1">The LITAF domain is stabilized by a bound zinc ion. The LITAF domain contains an amphipathic helix that mediates interaction with lipid membranes. It interacts specifically with phosphatidylethanolamine lipid headgroups, but not with phosphoglycerol, phosphocholine, phosphoserine or inositolhexakisphosphate.</text>
</comment>
<comment type="PTM">
    <text evidence="1">Phosphorylated on tyrosine residues in response to EGF.</text>
</comment>
<comment type="disruption phenotype">
    <text evidence="9 10">No visible phenotype. Mice are born at the expected Mendelian rate and are fertile. Mutant mice display altered responses to nerve crush injury, with higher numbers of macrophages in injured nerves five days after nerve crush injury, but at later time points macrophage numbers in injured nerves are normal. Bone marrow-derived macrophages from mutant mice display increased migration in response to CCL3, but not in the absence of CCL3 (PubMed:22729949). Mutant mice show dramatically increased survival in response to a dose of lipopolysaccharide (LPS) that causes rapid death of 40% of wild-type mice (PubMed:22160695).</text>
</comment>
<comment type="similarity">
    <text evidence="13">Belongs to the CDIP1/LITAF family.</text>
</comment>
<comment type="sequence caution" evidence="13">
    <conflict type="erroneous initiation">
        <sequence resource="EMBL-CDS" id="AAG44246"/>
    </conflict>
</comment>
<keyword id="KW-1003">Cell membrane</keyword>
<keyword id="KW-0963">Cytoplasm</keyword>
<keyword id="KW-0238">DNA-binding</keyword>
<keyword id="KW-0967">Endosome</keyword>
<keyword id="KW-0333">Golgi apparatus</keyword>
<keyword id="KW-0458">Lysosome</keyword>
<keyword id="KW-0472">Membrane</keyword>
<keyword id="KW-0479">Metal-binding</keyword>
<keyword id="KW-0539">Nucleus</keyword>
<keyword id="KW-1185">Reference proteome</keyword>
<keyword id="KW-0804">Transcription</keyword>
<keyword id="KW-0805">Transcription regulation</keyword>
<keyword id="KW-0862">Zinc</keyword>
<dbReference type="EMBL" id="AF171100">
    <property type="protein sequence ID" value="AAF27312.1"/>
    <property type="molecule type" value="mRNA"/>
</dbReference>
<dbReference type="EMBL" id="AF230522">
    <property type="protein sequence ID" value="AAO49168.1"/>
    <property type="molecule type" value="mRNA"/>
</dbReference>
<dbReference type="EMBL" id="AK018578">
    <property type="protein sequence ID" value="BAB31289.1"/>
    <property type="molecule type" value="mRNA"/>
</dbReference>
<dbReference type="EMBL" id="AK076162">
    <property type="protein sequence ID" value="BAC36228.1"/>
    <property type="molecule type" value="mRNA"/>
</dbReference>
<dbReference type="EMBL" id="AK151053">
    <property type="protein sequence ID" value="BAE30070.1"/>
    <property type="molecule type" value="mRNA"/>
</dbReference>
<dbReference type="EMBL" id="AK159533">
    <property type="protein sequence ID" value="BAE35161.1"/>
    <property type="molecule type" value="mRNA"/>
</dbReference>
<dbReference type="EMBL" id="BC018559">
    <property type="protein sequence ID" value="AAH18559.1"/>
    <property type="molecule type" value="mRNA"/>
</dbReference>
<dbReference type="EMBL" id="AF220207">
    <property type="protein sequence ID" value="AAG44246.1"/>
    <property type="status" value="ALT_INIT"/>
    <property type="molecule type" value="mRNA"/>
</dbReference>
<dbReference type="CCDS" id="CCDS27958.1"/>
<dbReference type="RefSeq" id="NP_064364.1">
    <property type="nucleotide sequence ID" value="NM_019980.2"/>
</dbReference>
<dbReference type="RefSeq" id="XP_006522490.1">
    <property type="nucleotide sequence ID" value="XM_006522427.1"/>
</dbReference>
<dbReference type="RefSeq" id="XP_030105082.1">
    <property type="nucleotide sequence ID" value="XM_030249222.2"/>
</dbReference>
<dbReference type="BioGRID" id="208144">
    <property type="interactions" value="2"/>
</dbReference>
<dbReference type="FunCoup" id="Q9JLJ0">
    <property type="interactions" value="513"/>
</dbReference>
<dbReference type="IntAct" id="Q9JLJ0">
    <property type="interactions" value="2"/>
</dbReference>
<dbReference type="STRING" id="10090.ENSMUSP00000023143"/>
<dbReference type="GlyGen" id="Q9JLJ0">
    <property type="glycosylation" value="2 sites"/>
</dbReference>
<dbReference type="iPTMnet" id="Q9JLJ0"/>
<dbReference type="PhosphoSitePlus" id="Q9JLJ0"/>
<dbReference type="SwissPalm" id="Q9JLJ0"/>
<dbReference type="PaxDb" id="10090-ENSMUSP00000023143"/>
<dbReference type="ProteomicsDB" id="292265"/>
<dbReference type="Antibodypedia" id="1839">
    <property type="antibodies" value="290 antibodies from 35 providers"/>
</dbReference>
<dbReference type="DNASU" id="56722"/>
<dbReference type="Ensembl" id="ENSMUST00000023143.14">
    <property type="protein sequence ID" value="ENSMUSP00000023143.8"/>
    <property type="gene ID" value="ENSMUSG00000022500.16"/>
</dbReference>
<dbReference type="Ensembl" id="ENSMUST00000117360.8">
    <property type="protein sequence ID" value="ENSMUSP00000112667.2"/>
    <property type="gene ID" value="ENSMUSG00000022500.16"/>
</dbReference>
<dbReference type="GeneID" id="56722"/>
<dbReference type="KEGG" id="mmu:56722"/>
<dbReference type="UCSC" id="uc007yen.2">
    <property type="organism name" value="mouse"/>
</dbReference>
<dbReference type="AGR" id="MGI:1929512"/>
<dbReference type="CTD" id="9516"/>
<dbReference type="MGI" id="MGI:1929512">
    <property type="gene designation" value="Litaf"/>
</dbReference>
<dbReference type="VEuPathDB" id="HostDB:ENSMUSG00000022500"/>
<dbReference type="eggNOG" id="ENOG502S2GM">
    <property type="taxonomic scope" value="Eukaryota"/>
</dbReference>
<dbReference type="GeneTree" id="ENSGT00940000155366"/>
<dbReference type="HOGENOM" id="CLU_095549_3_0_1"/>
<dbReference type="InParanoid" id="Q9JLJ0"/>
<dbReference type="OMA" id="VTFYDRP"/>
<dbReference type="OrthoDB" id="4713066at2759"/>
<dbReference type="PhylomeDB" id="Q9JLJ0"/>
<dbReference type="TreeFam" id="TF313294"/>
<dbReference type="BioGRID-ORCS" id="56722">
    <property type="hits" value="1 hit in 78 CRISPR screens"/>
</dbReference>
<dbReference type="ChiTaRS" id="Litaf">
    <property type="organism name" value="mouse"/>
</dbReference>
<dbReference type="PRO" id="PR:Q9JLJ0"/>
<dbReference type="Proteomes" id="UP000000589">
    <property type="component" value="Chromosome 16"/>
</dbReference>
<dbReference type="RNAct" id="Q9JLJ0">
    <property type="molecule type" value="protein"/>
</dbReference>
<dbReference type="Bgee" id="ENSMUSG00000022500">
    <property type="expression patterns" value="Expressed in granulocyte and 279 other cell types or tissues"/>
</dbReference>
<dbReference type="ExpressionAtlas" id="Q9JLJ0">
    <property type="expression patterns" value="baseline and differential"/>
</dbReference>
<dbReference type="GO" id="GO:0098559">
    <property type="term" value="C:cytoplasmic side of early endosome membrane"/>
    <property type="evidence" value="ECO:0000250"/>
    <property type="project" value="UniProtKB"/>
</dbReference>
<dbReference type="GO" id="GO:0098560">
    <property type="term" value="C:cytoplasmic side of late endosome membrane"/>
    <property type="evidence" value="ECO:0000250"/>
    <property type="project" value="UniProtKB"/>
</dbReference>
<dbReference type="GO" id="GO:0098574">
    <property type="term" value="C:cytoplasmic side of lysosomal membrane"/>
    <property type="evidence" value="ECO:0000250"/>
    <property type="project" value="UniProtKB"/>
</dbReference>
<dbReference type="GO" id="GO:0009898">
    <property type="term" value="C:cytoplasmic side of plasma membrane"/>
    <property type="evidence" value="ECO:0000250"/>
    <property type="project" value="UniProtKB"/>
</dbReference>
<dbReference type="GO" id="GO:0005794">
    <property type="term" value="C:Golgi apparatus"/>
    <property type="evidence" value="ECO:0000250"/>
    <property type="project" value="UniProtKB"/>
</dbReference>
<dbReference type="GO" id="GO:0000139">
    <property type="term" value="C:Golgi membrane"/>
    <property type="evidence" value="ECO:0007669"/>
    <property type="project" value="UniProtKB-SubCell"/>
</dbReference>
<dbReference type="GO" id="GO:0005765">
    <property type="term" value="C:lysosomal membrane"/>
    <property type="evidence" value="ECO:0000266"/>
    <property type="project" value="MGI"/>
</dbReference>
<dbReference type="GO" id="GO:0005654">
    <property type="term" value="C:nucleoplasm"/>
    <property type="evidence" value="ECO:0007669"/>
    <property type="project" value="Ensembl"/>
</dbReference>
<dbReference type="GO" id="GO:0001228">
    <property type="term" value="F:DNA-binding transcription activator activity, RNA polymerase II-specific"/>
    <property type="evidence" value="ECO:0007669"/>
    <property type="project" value="Ensembl"/>
</dbReference>
<dbReference type="GO" id="GO:0042802">
    <property type="term" value="F:identical protein binding"/>
    <property type="evidence" value="ECO:0007669"/>
    <property type="project" value="Ensembl"/>
</dbReference>
<dbReference type="GO" id="GO:0000978">
    <property type="term" value="F:RNA polymerase II cis-regulatory region sequence-specific DNA binding"/>
    <property type="evidence" value="ECO:0007669"/>
    <property type="project" value="Ensembl"/>
</dbReference>
<dbReference type="GO" id="GO:0050699">
    <property type="term" value="F:WW domain binding"/>
    <property type="evidence" value="ECO:0000250"/>
    <property type="project" value="UniProtKB"/>
</dbReference>
<dbReference type="GO" id="GO:0008270">
    <property type="term" value="F:zinc ion binding"/>
    <property type="evidence" value="ECO:0000250"/>
    <property type="project" value="UniProtKB"/>
</dbReference>
<dbReference type="GO" id="GO:0071222">
    <property type="term" value="P:cellular response to lipopolysaccharide"/>
    <property type="evidence" value="ECO:0000315"/>
    <property type="project" value="MGI"/>
</dbReference>
<dbReference type="GO" id="GO:1901223">
    <property type="term" value="P:negative regulation of non-canonical NF-kappaB signal transduction"/>
    <property type="evidence" value="ECO:0000315"/>
    <property type="project" value="MGI"/>
</dbReference>
<dbReference type="GO" id="GO:0043123">
    <property type="term" value="P:positive regulation of canonical NF-kappaB signal transduction"/>
    <property type="evidence" value="ECO:0000250"/>
    <property type="project" value="UniProtKB"/>
</dbReference>
<dbReference type="GO" id="GO:0010935">
    <property type="term" value="P:regulation of macrophage cytokine production"/>
    <property type="evidence" value="ECO:0000315"/>
    <property type="project" value="MGI"/>
</dbReference>
<dbReference type="GO" id="GO:0032496">
    <property type="term" value="P:response to lipopolysaccharide"/>
    <property type="evidence" value="ECO:0000315"/>
    <property type="project" value="MGI"/>
</dbReference>
<dbReference type="InterPro" id="IPR006629">
    <property type="entry name" value="LITAF"/>
</dbReference>
<dbReference type="InterPro" id="IPR037519">
    <property type="entry name" value="LITAF_fam"/>
</dbReference>
<dbReference type="PANTHER" id="PTHR23292">
    <property type="entry name" value="LIPOPOLYSACCHARIDE-INDUCED TUMOR NECROSIS FACTOR-ALPHA FACTOR"/>
    <property type="match status" value="1"/>
</dbReference>
<dbReference type="PANTHER" id="PTHR23292:SF2">
    <property type="entry name" value="LIPOPOLYSACCHARIDE-INDUCED TUMOR NECROSIS FACTOR-ALPHA FACTOR"/>
    <property type="match status" value="1"/>
</dbReference>
<dbReference type="Pfam" id="PF10601">
    <property type="entry name" value="zf-LITAF-like"/>
    <property type="match status" value="1"/>
</dbReference>
<dbReference type="SMART" id="SM00714">
    <property type="entry name" value="LITAF"/>
    <property type="match status" value="1"/>
</dbReference>
<dbReference type="PROSITE" id="PS51837">
    <property type="entry name" value="LITAF"/>
    <property type="match status" value="1"/>
</dbReference>
<evidence type="ECO:0000250" key="1">
    <source>
        <dbReference type="UniProtKB" id="Q99732"/>
    </source>
</evidence>
<evidence type="ECO:0000255" key="2">
    <source>
        <dbReference type="PROSITE-ProRule" id="PRU01181"/>
    </source>
</evidence>
<evidence type="ECO:0000269" key="3">
    <source>
    </source>
</evidence>
<evidence type="ECO:0000269" key="4">
    <source>
    </source>
</evidence>
<evidence type="ECO:0000269" key="5">
    <source>
    </source>
</evidence>
<evidence type="ECO:0000269" key="6">
    <source>
    </source>
</evidence>
<evidence type="ECO:0000269" key="7">
    <source>
    </source>
</evidence>
<evidence type="ECO:0000269" key="8">
    <source>
    </source>
</evidence>
<evidence type="ECO:0000269" key="9">
    <source>
    </source>
</evidence>
<evidence type="ECO:0000269" key="10">
    <source>
    </source>
</evidence>
<evidence type="ECO:0000269" key="11">
    <source>
    </source>
</evidence>
<evidence type="ECO:0000303" key="12">
    <source>
    </source>
</evidence>
<evidence type="ECO:0000305" key="13"/>
<gene>
    <name type="primary">Litaf</name>
    <name type="synonym">N4wbp3</name>
    <name type="synonym">Tbx1</name>
</gene>
<accession>Q9JLJ0</accession>
<accession>Q9EQI0</accession>
<reference key="1">
    <citation type="journal article" date="2002" name="Eur. J. Immunol.">
        <title>Negative regulation of monocyte chemoattractant protein-1 gene expression by a mouse estrogen-enhanced transcript.</title>
        <authorList>
            <person name="Xie L.-P."/>
            <person name="Fu W.-X."/>
            <person name="Jin C."/>
            <person name="Dong X.-Y."/>
            <person name="Chen W.-F."/>
        </authorList>
    </citation>
    <scope>NUCLEOTIDE SEQUENCE [MRNA]</scope>
    <scope>FUNCTION</scope>
    <scope>TISSUE SPECIFICITY</scope>
    <scope>INDUCTION</scope>
    <scope>SUBCELLULAR LOCATION</scope>
    <source>
        <tissue>Thymus</tissue>
    </source>
</reference>
<reference key="2">
    <citation type="journal article" date="2004" name="J. Endotoxin Res.">
        <title>Molecular cloning and characterization of mouse LITAF cDNA: role in the regulation of tumor necrosis factor-alpha (TNF-alpha) gene expression.</title>
        <authorList>
            <person name="Bolcato-Bellemin A.-L."/>
            <person name="Mattei M.-G."/>
            <person name="Fenton M."/>
            <person name="Amar S."/>
        </authorList>
    </citation>
    <scope>NUCLEOTIDE SEQUENCE [MRNA]</scope>
    <scope>FUNCTION</scope>
    <scope>TISSUE SPECIFICITY</scope>
    <scope>INDUCTION</scope>
    <scope>DEVELOPMENTAL STAGE</scope>
    <source>
        <tissue>Heart</tissue>
    </source>
</reference>
<reference key="3">
    <citation type="journal article" date="2005" name="Science">
        <title>The transcriptional landscape of the mammalian genome.</title>
        <authorList>
            <person name="Carninci P."/>
            <person name="Kasukawa T."/>
            <person name="Katayama S."/>
            <person name="Gough J."/>
            <person name="Frith M.C."/>
            <person name="Maeda N."/>
            <person name="Oyama R."/>
            <person name="Ravasi T."/>
            <person name="Lenhard B."/>
            <person name="Wells C."/>
            <person name="Kodzius R."/>
            <person name="Shimokawa K."/>
            <person name="Bajic V.B."/>
            <person name="Brenner S.E."/>
            <person name="Batalov S."/>
            <person name="Forrest A.R."/>
            <person name="Zavolan M."/>
            <person name="Davis M.J."/>
            <person name="Wilming L.G."/>
            <person name="Aidinis V."/>
            <person name="Allen J.E."/>
            <person name="Ambesi-Impiombato A."/>
            <person name="Apweiler R."/>
            <person name="Aturaliya R.N."/>
            <person name="Bailey T.L."/>
            <person name="Bansal M."/>
            <person name="Baxter L."/>
            <person name="Beisel K.W."/>
            <person name="Bersano T."/>
            <person name="Bono H."/>
            <person name="Chalk A.M."/>
            <person name="Chiu K.P."/>
            <person name="Choudhary V."/>
            <person name="Christoffels A."/>
            <person name="Clutterbuck D.R."/>
            <person name="Crowe M.L."/>
            <person name="Dalla E."/>
            <person name="Dalrymple B.P."/>
            <person name="de Bono B."/>
            <person name="Della Gatta G."/>
            <person name="di Bernardo D."/>
            <person name="Down T."/>
            <person name="Engstrom P."/>
            <person name="Fagiolini M."/>
            <person name="Faulkner G."/>
            <person name="Fletcher C.F."/>
            <person name="Fukushima T."/>
            <person name="Furuno M."/>
            <person name="Futaki S."/>
            <person name="Gariboldi M."/>
            <person name="Georgii-Hemming P."/>
            <person name="Gingeras T.R."/>
            <person name="Gojobori T."/>
            <person name="Green R.E."/>
            <person name="Gustincich S."/>
            <person name="Harbers M."/>
            <person name="Hayashi Y."/>
            <person name="Hensch T.K."/>
            <person name="Hirokawa N."/>
            <person name="Hill D."/>
            <person name="Huminiecki L."/>
            <person name="Iacono M."/>
            <person name="Ikeo K."/>
            <person name="Iwama A."/>
            <person name="Ishikawa T."/>
            <person name="Jakt M."/>
            <person name="Kanapin A."/>
            <person name="Katoh M."/>
            <person name="Kawasawa Y."/>
            <person name="Kelso J."/>
            <person name="Kitamura H."/>
            <person name="Kitano H."/>
            <person name="Kollias G."/>
            <person name="Krishnan S.P."/>
            <person name="Kruger A."/>
            <person name="Kummerfeld S.K."/>
            <person name="Kurochkin I.V."/>
            <person name="Lareau L.F."/>
            <person name="Lazarevic D."/>
            <person name="Lipovich L."/>
            <person name="Liu J."/>
            <person name="Liuni S."/>
            <person name="McWilliam S."/>
            <person name="Madan Babu M."/>
            <person name="Madera M."/>
            <person name="Marchionni L."/>
            <person name="Matsuda H."/>
            <person name="Matsuzawa S."/>
            <person name="Miki H."/>
            <person name="Mignone F."/>
            <person name="Miyake S."/>
            <person name="Morris K."/>
            <person name="Mottagui-Tabar S."/>
            <person name="Mulder N."/>
            <person name="Nakano N."/>
            <person name="Nakauchi H."/>
            <person name="Ng P."/>
            <person name="Nilsson R."/>
            <person name="Nishiguchi S."/>
            <person name="Nishikawa S."/>
            <person name="Nori F."/>
            <person name="Ohara O."/>
            <person name="Okazaki Y."/>
            <person name="Orlando V."/>
            <person name="Pang K.C."/>
            <person name="Pavan W.J."/>
            <person name="Pavesi G."/>
            <person name="Pesole G."/>
            <person name="Petrovsky N."/>
            <person name="Piazza S."/>
            <person name="Reed J."/>
            <person name="Reid J.F."/>
            <person name="Ring B.Z."/>
            <person name="Ringwald M."/>
            <person name="Rost B."/>
            <person name="Ruan Y."/>
            <person name="Salzberg S.L."/>
            <person name="Sandelin A."/>
            <person name="Schneider C."/>
            <person name="Schoenbach C."/>
            <person name="Sekiguchi K."/>
            <person name="Semple C.A."/>
            <person name="Seno S."/>
            <person name="Sessa L."/>
            <person name="Sheng Y."/>
            <person name="Shibata Y."/>
            <person name="Shimada H."/>
            <person name="Shimada K."/>
            <person name="Silva D."/>
            <person name="Sinclair B."/>
            <person name="Sperling S."/>
            <person name="Stupka E."/>
            <person name="Sugiura K."/>
            <person name="Sultana R."/>
            <person name="Takenaka Y."/>
            <person name="Taki K."/>
            <person name="Tammoja K."/>
            <person name="Tan S.L."/>
            <person name="Tang S."/>
            <person name="Taylor M.S."/>
            <person name="Tegner J."/>
            <person name="Teichmann S.A."/>
            <person name="Ueda H.R."/>
            <person name="van Nimwegen E."/>
            <person name="Verardo R."/>
            <person name="Wei C.L."/>
            <person name="Yagi K."/>
            <person name="Yamanishi H."/>
            <person name="Zabarovsky E."/>
            <person name="Zhu S."/>
            <person name="Zimmer A."/>
            <person name="Hide W."/>
            <person name="Bult C."/>
            <person name="Grimmond S.M."/>
            <person name="Teasdale R.D."/>
            <person name="Liu E.T."/>
            <person name="Brusic V."/>
            <person name="Quackenbush J."/>
            <person name="Wahlestedt C."/>
            <person name="Mattick J.S."/>
            <person name="Hume D.A."/>
            <person name="Kai C."/>
            <person name="Sasaki D."/>
            <person name="Tomaru Y."/>
            <person name="Fukuda S."/>
            <person name="Kanamori-Katayama M."/>
            <person name="Suzuki M."/>
            <person name="Aoki J."/>
            <person name="Arakawa T."/>
            <person name="Iida J."/>
            <person name="Imamura K."/>
            <person name="Itoh M."/>
            <person name="Kato T."/>
            <person name="Kawaji H."/>
            <person name="Kawagashira N."/>
            <person name="Kawashima T."/>
            <person name="Kojima M."/>
            <person name="Kondo S."/>
            <person name="Konno H."/>
            <person name="Nakano K."/>
            <person name="Ninomiya N."/>
            <person name="Nishio T."/>
            <person name="Okada M."/>
            <person name="Plessy C."/>
            <person name="Shibata K."/>
            <person name="Shiraki T."/>
            <person name="Suzuki S."/>
            <person name="Tagami M."/>
            <person name="Waki K."/>
            <person name="Watahiki A."/>
            <person name="Okamura-Oho Y."/>
            <person name="Suzuki H."/>
            <person name="Kawai J."/>
            <person name="Hayashizaki Y."/>
        </authorList>
    </citation>
    <scope>NUCLEOTIDE SEQUENCE [LARGE SCALE MRNA]</scope>
    <source>
        <strain>C57BL/6J</strain>
        <tissue>Bone marrow</tissue>
        <tissue>Colon</tissue>
        <tissue>Head</tissue>
    </source>
</reference>
<reference key="4">
    <citation type="journal article" date="2004" name="Genome Res.">
        <title>The status, quality, and expansion of the NIH full-length cDNA project: the Mammalian Gene Collection (MGC).</title>
        <authorList>
            <consortium name="The MGC Project Team"/>
        </authorList>
    </citation>
    <scope>NUCLEOTIDE SEQUENCE [LARGE SCALE MRNA]</scope>
    <source>
        <strain>FVB/N</strain>
        <tissue>Mammary tumor</tissue>
    </source>
</reference>
<reference key="5">
    <citation type="journal article" date="2000" name="Biochem. J.">
        <title>Identification of multiple proteins expressed in murine embryos as binding partners for the WW domains of the ubiquitin-protein ligase Nedd4.</title>
        <authorList>
            <person name="Jolliffe C.N."/>
            <person name="Harvey K.F."/>
            <person name="Haines B.P."/>
            <person name="Parasivam G."/>
            <person name="Kumar S."/>
        </authorList>
    </citation>
    <scope>NUCLEOTIDE SEQUENCE [MRNA] OF 1-130</scope>
    <scope>INTERACTION WITH NEDD4</scope>
    <scope>MUTAGENESIS OF TYR-23 AND TYR-61</scope>
    <scope>DOMAIN</scope>
    <source>
        <tissue>Embryo</tissue>
    </source>
</reference>
<reference key="6">
    <citation type="journal article" date="2005" name="Proc. Natl. Acad. Sci. U.S.A.">
        <title>LPS induces the interaction of a transcription factor, LPS-induced TNF-alpha factor, and STAT6(B) with effects on multiple cytokines.</title>
        <authorList>
            <person name="Tang X."/>
            <person name="Marciano D.L."/>
            <person name="Leeman S.E."/>
            <person name="Amar S."/>
        </authorList>
    </citation>
    <scope>FUNCTION</scope>
    <scope>INTERACTION WITH STAT6</scope>
    <scope>INDUCTION BY LIPOPOLYSACCHARIDE</scope>
</reference>
<reference key="7">
    <citation type="journal article" date="2006" name="Proc. Natl. Acad. Sci. U.S.A.">
        <title>LPS-induced TNF-alpha factor (LITAF)-deficient mice express reduced LPS-induced cytokine: Evidence for LITAF-dependent LPS signaling pathways.</title>
        <authorList>
            <person name="Tang X."/>
            <person name="Metzger D."/>
            <person name="Leeman S."/>
            <person name="Amar S."/>
        </authorList>
    </citation>
    <scope>FUNCTION</scope>
</reference>
<reference key="8">
    <citation type="journal article" date="2011" name="PLoS ONE">
        <title>Novel regulation of CCL2 gene expression by murine LITAF and STAT6B.</title>
        <authorList>
            <person name="Tang X."/>
            <person name="Yang Y."/>
            <person name="Amar S."/>
        </authorList>
    </citation>
    <scope>FUNCTION</scope>
</reference>
<reference key="9">
    <citation type="journal article" date="2011" name="Proc. Natl. Acad. Sci. U.S.A.">
        <title>Whole-body deletion of LPS-induced TNF-alpha factor (LITAF) markedly improves experimental endotoxic shock and inflammatory arthritis.</title>
        <authorList>
            <person name="Merrill J.C."/>
            <person name="You J."/>
            <person name="Constable C."/>
            <person name="Leeman S.E."/>
            <person name="Amar S."/>
        </authorList>
    </citation>
    <scope>FUNCTION</scope>
    <scope>DISRUPTION PHENOTYPE</scope>
    <scope>TISSUE SPECIFICITY</scope>
</reference>
<reference key="10">
    <citation type="journal article" date="2012" name="Glia">
        <title>LITAF (SIMPLE) regulates Wallerian degeneration after injury but is not essential for peripheral nerve development and maintenance: implications for Charcot-Marie-Tooth disease.</title>
        <authorList>
            <person name="Somandin C."/>
            <person name="Gerber D."/>
            <person name="Pereira J.A."/>
            <person name="Horn M."/>
            <person name="Suter U."/>
        </authorList>
    </citation>
    <scope>FUNCTION</scope>
    <scope>DISRUPTION PHENOTYPE</scope>
    <scope>SUBCELLULAR LOCATION</scope>
    <scope>TISSUE SPECIFICITY</scope>
    <scope>DEVELOPMENTAL STAGE</scope>
</reference>
<reference key="11">
    <citation type="journal article" date="2012" name="J. Cell Biol.">
        <title>Charcot-Marie-Tooth disease-linked protein SIMPLE functions with the ESCRT machinery in endosomal trafficking.</title>
        <authorList>
            <person name="Lee S.M."/>
            <person name="Chin L.S."/>
            <person name="Li L."/>
        </authorList>
    </citation>
    <scope>FUNCTION</scope>
</reference>
<feature type="chain" id="PRO_0000084441" description="Lipopolysaccharide-induced tumor necrosis factor-alpha factor homolog">
    <location>
        <begin position="1"/>
        <end position="161"/>
    </location>
</feature>
<feature type="domain" description="LITAF" evidence="2">
    <location>
        <begin position="76"/>
        <end position="160"/>
    </location>
</feature>
<feature type="region of interest" description="Membrane-binding amphipathic helix" evidence="13">
    <location>
        <begin position="111"/>
        <end position="134"/>
    </location>
</feature>
<feature type="short sequence motif" description="PPxY motif">
    <location>
        <begin position="20"/>
        <end position="23"/>
    </location>
</feature>
<feature type="binding site" evidence="1">
    <location>
        <position position="96"/>
    </location>
    <ligand>
        <name>Zn(2+)</name>
        <dbReference type="ChEBI" id="CHEBI:29105"/>
    </ligand>
</feature>
<feature type="binding site" evidence="1">
    <location>
        <position position="99"/>
    </location>
    <ligand>
        <name>Zn(2+)</name>
        <dbReference type="ChEBI" id="CHEBI:29105"/>
    </ligand>
</feature>
<feature type="binding site" evidence="1">
    <location>
        <position position="148"/>
    </location>
    <ligand>
        <name>Zn(2+)</name>
        <dbReference type="ChEBI" id="CHEBI:29105"/>
    </ligand>
</feature>
<feature type="binding site" evidence="1">
    <location>
        <position position="151"/>
    </location>
    <ligand>
        <name>Zn(2+)</name>
        <dbReference type="ChEBI" id="CHEBI:29105"/>
    </ligand>
</feature>
<feature type="mutagenesis site" description="Abolishes interaction with NEDD4." evidence="3">
    <original>Y</original>
    <variation>A</variation>
    <location>
        <position position="23"/>
    </location>
</feature>
<feature type="mutagenesis site" description="No effect on interaction with NEDD4." evidence="3">
    <original>Y</original>
    <variation>A</variation>
    <location>
        <position position="61"/>
    </location>
</feature>